<gene>
    <name type="ordered locus">RSc2196</name>
    <name type="ORF">RS01403</name>
</gene>
<comment type="function">
    <text evidence="1">Nucleoside triphosphate pyrophosphatase that hydrolyzes dTTP and UTP. May have a dual role in cell division arrest and in preventing the incorporation of modified nucleotides into cellular nucleic acids.</text>
</comment>
<comment type="catalytic activity">
    <reaction evidence="1">
        <text>dTTP + H2O = dTMP + diphosphate + H(+)</text>
        <dbReference type="Rhea" id="RHEA:28534"/>
        <dbReference type="ChEBI" id="CHEBI:15377"/>
        <dbReference type="ChEBI" id="CHEBI:15378"/>
        <dbReference type="ChEBI" id="CHEBI:33019"/>
        <dbReference type="ChEBI" id="CHEBI:37568"/>
        <dbReference type="ChEBI" id="CHEBI:63528"/>
        <dbReference type="EC" id="3.6.1.9"/>
    </reaction>
</comment>
<comment type="catalytic activity">
    <reaction evidence="1">
        <text>UTP + H2O = UMP + diphosphate + H(+)</text>
        <dbReference type="Rhea" id="RHEA:29395"/>
        <dbReference type="ChEBI" id="CHEBI:15377"/>
        <dbReference type="ChEBI" id="CHEBI:15378"/>
        <dbReference type="ChEBI" id="CHEBI:33019"/>
        <dbReference type="ChEBI" id="CHEBI:46398"/>
        <dbReference type="ChEBI" id="CHEBI:57865"/>
        <dbReference type="EC" id="3.6.1.9"/>
    </reaction>
</comment>
<comment type="cofactor">
    <cofactor evidence="1">
        <name>a divalent metal cation</name>
        <dbReference type="ChEBI" id="CHEBI:60240"/>
    </cofactor>
</comment>
<comment type="subcellular location">
    <subcellularLocation>
        <location evidence="1">Cytoplasm</location>
    </subcellularLocation>
</comment>
<comment type="similarity">
    <text evidence="1">Belongs to the Maf family. YhdE subfamily.</text>
</comment>
<protein>
    <recommendedName>
        <fullName evidence="1">dTTP/UTP pyrophosphatase</fullName>
        <shortName evidence="1">dTTPase/UTPase</shortName>
        <ecNumber evidence="1">3.6.1.9</ecNumber>
    </recommendedName>
    <alternativeName>
        <fullName evidence="1">Nucleoside triphosphate pyrophosphatase</fullName>
    </alternativeName>
    <alternativeName>
        <fullName evidence="1">Nucleotide pyrophosphatase</fullName>
        <shortName evidence="1">Nucleotide PPase</shortName>
    </alternativeName>
</protein>
<reference key="1">
    <citation type="journal article" date="2002" name="Nature">
        <title>Genome sequence of the plant pathogen Ralstonia solanacearum.</title>
        <authorList>
            <person name="Salanoubat M."/>
            <person name="Genin S."/>
            <person name="Artiguenave F."/>
            <person name="Gouzy J."/>
            <person name="Mangenot S."/>
            <person name="Arlat M."/>
            <person name="Billault A."/>
            <person name="Brottier P."/>
            <person name="Camus J.-C."/>
            <person name="Cattolico L."/>
            <person name="Chandler M."/>
            <person name="Choisne N."/>
            <person name="Claudel-Renard C."/>
            <person name="Cunnac S."/>
            <person name="Demange N."/>
            <person name="Gaspin C."/>
            <person name="Lavie M."/>
            <person name="Moisan A."/>
            <person name="Robert C."/>
            <person name="Saurin W."/>
            <person name="Schiex T."/>
            <person name="Siguier P."/>
            <person name="Thebault P."/>
            <person name="Whalen M."/>
            <person name="Wincker P."/>
            <person name="Levy M."/>
            <person name="Weissenbach J."/>
            <person name="Boucher C.A."/>
        </authorList>
    </citation>
    <scope>NUCLEOTIDE SEQUENCE [LARGE SCALE GENOMIC DNA]</scope>
    <source>
        <strain>ATCC BAA-1114 / GMI1000</strain>
    </source>
</reference>
<evidence type="ECO:0000255" key="1">
    <source>
        <dbReference type="HAMAP-Rule" id="MF_00528"/>
    </source>
</evidence>
<name>NTPPA_RALN1</name>
<proteinExistence type="inferred from homology"/>
<accession>P58634</accession>
<sequence length="207" mass="21866">MEPTAAPHPHLYLASQSPRRQELLRQIGVRFELLLADGDEDAEALEAVLLGETPDDYVQRVCALKAQAAARRRAARGLPARPILTSDTTVCLGGEILGKPADAADAHRMLRGMSGREHRVLTAVTVVTADGTPMHALSVSQVRFAVLTDVDIARYIASGEPFGKAGAYGIQGRAAAFVAHISGSYSGIMGLPLFETAALLAQAAITL</sequence>
<feature type="chain" id="PRO_0000123051" description="dTTP/UTP pyrophosphatase">
    <location>
        <begin position="1"/>
        <end position="207"/>
    </location>
</feature>
<feature type="active site" description="Proton acceptor" evidence="1">
    <location>
        <position position="87"/>
    </location>
</feature>
<feature type="site" description="Important for substrate specificity" evidence="1">
    <location>
        <position position="19"/>
    </location>
</feature>
<feature type="site" description="Important for substrate specificity" evidence="1">
    <location>
        <position position="88"/>
    </location>
</feature>
<feature type="site" description="Important for substrate specificity" evidence="1">
    <location>
        <position position="171"/>
    </location>
</feature>
<dbReference type="EC" id="3.6.1.9" evidence="1"/>
<dbReference type="EMBL" id="AL646052">
    <property type="protein sequence ID" value="CAD15903.1"/>
    <property type="molecule type" value="Genomic_DNA"/>
</dbReference>
<dbReference type="RefSeq" id="WP_011002124.1">
    <property type="nucleotide sequence ID" value="NC_003295.1"/>
</dbReference>
<dbReference type="SMR" id="P58634"/>
<dbReference type="STRING" id="267608.RSc2196"/>
<dbReference type="EnsemblBacteria" id="CAD15903">
    <property type="protein sequence ID" value="CAD15903"/>
    <property type="gene ID" value="RSc2196"/>
</dbReference>
<dbReference type="KEGG" id="rso:RSc2196"/>
<dbReference type="eggNOG" id="COG0424">
    <property type="taxonomic scope" value="Bacteria"/>
</dbReference>
<dbReference type="HOGENOM" id="CLU_040416_2_1_4"/>
<dbReference type="Proteomes" id="UP000001436">
    <property type="component" value="Chromosome"/>
</dbReference>
<dbReference type="GO" id="GO:0005737">
    <property type="term" value="C:cytoplasm"/>
    <property type="evidence" value="ECO:0007669"/>
    <property type="project" value="UniProtKB-SubCell"/>
</dbReference>
<dbReference type="GO" id="GO:0036218">
    <property type="term" value="F:dTTP diphosphatase activity"/>
    <property type="evidence" value="ECO:0007669"/>
    <property type="project" value="RHEA"/>
</dbReference>
<dbReference type="GO" id="GO:0036221">
    <property type="term" value="F:UTP diphosphatase activity"/>
    <property type="evidence" value="ECO:0007669"/>
    <property type="project" value="RHEA"/>
</dbReference>
<dbReference type="GO" id="GO:0009117">
    <property type="term" value="P:nucleotide metabolic process"/>
    <property type="evidence" value="ECO:0007669"/>
    <property type="project" value="UniProtKB-KW"/>
</dbReference>
<dbReference type="CDD" id="cd00555">
    <property type="entry name" value="Maf"/>
    <property type="match status" value="1"/>
</dbReference>
<dbReference type="Gene3D" id="3.90.950.10">
    <property type="match status" value="1"/>
</dbReference>
<dbReference type="HAMAP" id="MF_00528">
    <property type="entry name" value="Maf"/>
    <property type="match status" value="1"/>
</dbReference>
<dbReference type="InterPro" id="IPR029001">
    <property type="entry name" value="ITPase-like_fam"/>
</dbReference>
<dbReference type="InterPro" id="IPR003697">
    <property type="entry name" value="Maf-like"/>
</dbReference>
<dbReference type="NCBIfam" id="TIGR00172">
    <property type="entry name" value="maf"/>
    <property type="match status" value="1"/>
</dbReference>
<dbReference type="PANTHER" id="PTHR43213">
    <property type="entry name" value="BIFUNCTIONAL DTTP/UTP PYROPHOSPHATASE/METHYLTRANSFERASE PROTEIN-RELATED"/>
    <property type="match status" value="1"/>
</dbReference>
<dbReference type="PANTHER" id="PTHR43213:SF5">
    <property type="entry name" value="BIFUNCTIONAL DTTP_UTP PYROPHOSPHATASE_METHYLTRANSFERASE PROTEIN-RELATED"/>
    <property type="match status" value="1"/>
</dbReference>
<dbReference type="Pfam" id="PF02545">
    <property type="entry name" value="Maf"/>
    <property type="match status" value="1"/>
</dbReference>
<dbReference type="PIRSF" id="PIRSF006305">
    <property type="entry name" value="Maf"/>
    <property type="match status" value="1"/>
</dbReference>
<dbReference type="SUPFAM" id="SSF52972">
    <property type="entry name" value="ITPase-like"/>
    <property type="match status" value="1"/>
</dbReference>
<organism>
    <name type="scientific">Ralstonia nicotianae (strain ATCC BAA-1114 / GMI1000)</name>
    <name type="common">Ralstonia solanacearum</name>
    <dbReference type="NCBI Taxonomy" id="267608"/>
    <lineage>
        <taxon>Bacteria</taxon>
        <taxon>Pseudomonadati</taxon>
        <taxon>Pseudomonadota</taxon>
        <taxon>Betaproteobacteria</taxon>
        <taxon>Burkholderiales</taxon>
        <taxon>Burkholderiaceae</taxon>
        <taxon>Ralstonia</taxon>
        <taxon>Ralstonia solanacearum species complex</taxon>
    </lineage>
</organism>
<keyword id="KW-0963">Cytoplasm</keyword>
<keyword id="KW-0378">Hydrolase</keyword>
<keyword id="KW-0546">Nucleotide metabolism</keyword>
<keyword id="KW-1185">Reference proteome</keyword>